<feature type="chain" id="PRO_0000457904" description="Multiple C2 domain and transmembrane region protein 10">
    <location>
        <begin position="1"/>
        <end position="1012"/>
    </location>
</feature>
<feature type="transmembrane region" description="Helical" evidence="1">
    <location>
        <begin position="810"/>
        <end position="830"/>
    </location>
</feature>
<feature type="transmembrane region" description="Helical" evidence="1">
    <location>
        <begin position="841"/>
        <end position="861"/>
    </location>
</feature>
<feature type="transmembrane region" description="Helical" evidence="1">
    <location>
        <begin position="952"/>
        <end position="972"/>
    </location>
</feature>
<feature type="domain" description="C2 1" evidence="2">
    <location>
        <begin position="1"/>
        <end position="115"/>
    </location>
</feature>
<feature type="domain" description="C2 2" evidence="2">
    <location>
        <begin position="262"/>
        <end position="376"/>
    </location>
</feature>
<feature type="domain" description="C2 3" evidence="2">
    <location>
        <begin position="411"/>
        <end position="551"/>
    </location>
</feature>
<feature type="domain" description="C2 4" evidence="2">
    <location>
        <begin position="585"/>
        <end position="710"/>
    </location>
</feature>
<feature type="region of interest" description="Disordered" evidence="3">
    <location>
        <begin position="141"/>
        <end position="203"/>
    </location>
</feature>
<feature type="compositionally biased region" description="Basic residues" evidence="3">
    <location>
        <begin position="148"/>
        <end position="160"/>
    </location>
</feature>
<feature type="compositionally biased region" description="Low complexity" evidence="3">
    <location>
        <begin position="161"/>
        <end position="180"/>
    </location>
</feature>
<feature type="compositionally biased region" description="Low complexity" evidence="3">
    <location>
        <begin position="188"/>
        <end position="202"/>
    </location>
</feature>
<feature type="binding site" evidence="2">
    <location>
        <position position="296"/>
    </location>
    <ligand>
        <name>Ca(2+)</name>
        <dbReference type="ChEBI" id="CHEBI:29108"/>
        <label>1</label>
    </ligand>
</feature>
<feature type="binding site" evidence="2">
    <location>
        <position position="344"/>
    </location>
    <ligand>
        <name>Ca(2+)</name>
        <dbReference type="ChEBI" id="CHEBI:29108"/>
        <label>1</label>
    </ligand>
</feature>
<feature type="binding site" evidence="2">
    <location>
        <position position="344"/>
    </location>
    <ligand>
        <name>Ca(2+)</name>
        <dbReference type="ChEBI" id="CHEBI:29108"/>
        <label>2</label>
    </ligand>
</feature>
<feature type="binding site" evidence="2">
    <location>
        <position position="346"/>
    </location>
    <ligand>
        <name>Ca(2+)</name>
        <dbReference type="ChEBI" id="CHEBI:29108"/>
        <label>1</label>
    </ligand>
</feature>
<feature type="binding site" evidence="2">
    <location>
        <position position="346"/>
    </location>
    <ligand>
        <name>Ca(2+)</name>
        <dbReference type="ChEBI" id="CHEBI:29108"/>
        <label>2</label>
    </ligand>
</feature>
<feature type="binding site" evidence="2">
    <location>
        <position position="349"/>
    </location>
    <ligand>
        <name>Ca(2+)</name>
        <dbReference type="ChEBI" id="CHEBI:29108"/>
        <label>2</label>
    </ligand>
</feature>
<reference key="1">
    <citation type="journal article" date="2000" name="Nature">
        <title>Sequence and analysis of chromosome 1 of the plant Arabidopsis thaliana.</title>
        <authorList>
            <person name="Theologis A."/>
            <person name="Ecker J.R."/>
            <person name="Palm C.J."/>
            <person name="Federspiel N.A."/>
            <person name="Kaul S."/>
            <person name="White O."/>
            <person name="Alonso J."/>
            <person name="Altafi H."/>
            <person name="Araujo R."/>
            <person name="Bowman C.L."/>
            <person name="Brooks S.Y."/>
            <person name="Buehler E."/>
            <person name="Chan A."/>
            <person name="Chao Q."/>
            <person name="Chen H."/>
            <person name="Cheuk R.F."/>
            <person name="Chin C.W."/>
            <person name="Chung M.K."/>
            <person name="Conn L."/>
            <person name="Conway A.B."/>
            <person name="Conway A.R."/>
            <person name="Creasy T.H."/>
            <person name="Dewar K."/>
            <person name="Dunn P."/>
            <person name="Etgu P."/>
            <person name="Feldblyum T.V."/>
            <person name="Feng J.-D."/>
            <person name="Fong B."/>
            <person name="Fujii C.Y."/>
            <person name="Gill J.E."/>
            <person name="Goldsmith A.D."/>
            <person name="Haas B."/>
            <person name="Hansen N.F."/>
            <person name="Hughes B."/>
            <person name="Huizar L."/>
            <person name="Hunter J.L."/>
            <person name="Jenkins J."/>
            <person name="Johnson-Hopson C."/>
            <person name="Khan S."/>
            <person name="Khaykin E."/>
            <person name="Kim C.J."/>
            <person name="Koo H.L."/>
            <person name="Kremenetskaia I."/>
            <person name="Kurtz D.B."/>
            <person name="Kwan A."/>
            <person name="Lam B."/>
            <person name="Langin-Hooper S."/>
            <person name="Lee A."/>
            <person name="Lee J.M."/>
            <person name="Lenz C.A."/>
            <person name="Li J.H."/>
            <person name="Li Y.-P."/>
            <person name="Lin X."/>
            <person name="Liu S.X."/>
            <person name="Liu Z.A."/>
            <person name="Luros J.S."/>
            <person name="Maiti R."/>
            <person name="Marziali A."/>
            <person name="Militscher J."/>
            <person name="Miranda M."/>
            <person name="Nguyen M."/>
            <person name="Nierman W.C."/>
            <person name="Osborne B.I."/>
            <person name="Pai G."/>
            <person name="Peterson J."/>
            <person name="Pham P.K."/>
            <person name="Rizzo M."/>
            <person name="Rooney T."/>
            <person name="Rowley D."/>
            <person name="Sakano H."/>
            <person name="Salzberg S.L."/>
            <person name="Schwartz J.R."/>
            <person name="Shinn P."/>
            <person name="Southwick A.M."/>
            <person name="Sun H."/>
            <person name="Tallon L.J."/>
            <person name="Tambunga G."/>
            <person name="Toriumi M.J."/>
            <person name="Town C.D."/>
            <person name="Utterback T."/>
            <person name="Van Aken S."/>
            <person name="Vaysberg M."/>
            <person name="Vysotskaia V.S."/>
            <person name="Walker M."/>
            <person name="Wu D."/>
            <person name="Yu G."/>
            <person name="Fraser C.M."/>
            <person name="Venter J.C."/>
            <person name="Davis R.W."/>
        </authorList>
    </citation>
    <scope>NUCLEOTIDE SEQUENCE [LARGE SCALE GENOMIC DNA]</scope>
    <source>
        <strain>cv. Columbia</strain>
    </source>
</reference>
<reference key="2">
    <citation type="journal article" date="2017" name="Plant J.">
        <title>Araport11: a complete reannotation of the Arabidopsis thaliana reference genome.</title>
        <authorList>
            <person name="Cheng C.Y."/>
            <person name="Krishnakumar V."/>
            <person name="Chan A.P."/>
            <person name="Thibaud-Nissen F."/>
            <person name="Schobel S."/>
            <person name="Town C.D."/>
        </authorList>
    </citation>
    <scope>GENOME REANNOTATION</scope>
    <source>
        <strain>cv. Columbia</strain>
    </source>
</reference>
<reference key="3">
    <citation type="journal article" date="2018" name="Plant Physiol.">
        <title>Characterization of multiple C2 domain and transmembrane region proteins in Arabidopsis.</title>
        <authorList>
            <person name="Liu L."/>
            <person name="Li C."/>
            <person name="Liang Z."/>
            <person name="Yu H."/>
        </authorList>
    </citation>
    <scope>TISSUE SPECIFICITY</scope>
    <scope>DEVELOPMENTAL STAGE</scope>
    <scope>SUBCELLULAR LOCATION</scope>
    <scope>GENE FAMILY</scope>
    <scope>NOMENCLATURE</scope>
    <source>
        <strain>cv. Columbia</strain>
    </source>
</reference>
<organism>
    <name type="scientific">Arabidopsis thaliana</name>
    <name type="common">Mouse-ear cress</name>
    <dbReference type="NCBI Taxonomy" id="3702"/>
    <lineage>
        <taxon>Eukaryota</taxon>
        <taxon>Viridiplantae</taxon>
        <taxon>Streptophyta</taxon>
        <taxon>Embryophyta</taxon>
        <taxon>Tracheophyta</taxon>
        <taxon>Spermatophyta</taxon>
        <taxon>Magnoliopsida</taxon>
        <taxon>eudicotyledons</taxon>
        <taxon>Gunneridae</taxon>
        <taxon>Pentapetalae</taxon>
        <taxon>rosids</taxon>
        <taxon>malvids</taxon>
        <taxon>Brassicales</taxon>
        <taxon>Brassicaceae</taxon>
        <taxon>Camelineae</taxon>
        <taxon>Arabidopsis</taxon>
    </lineage>
</organism>
<protein>
    <recommendedName>
        <fullName evidence="5">Multiple C2 domain and transmembrane region protein 10</fullName>
    </recommendedName>
</protein>
<accession>O64492</accession>
<dbReference type="EMBL" id="AC002411">
    <property type="protein sequence ID" value="AAC16746.1"/>
    <property type="molecule type" value="Genomic_DNA"/>
</dbReference>
<dbReference type="EMBL" id="CP002684">
    <property type="protein sequence ID" value="AEE27663.1"/>
    <property type="molecule type" value="Genomic_DNA"/>
</dbReference>
<dbReference type="PIR" id="T00958">
    <property type="entry name" value="T00958"/>
</dbReference>
<dbReference type="RefSeq" id="NP_171911.1">
    <property type="nucleotide sequence ID" value="NM_100296.2"/>
</dbReference>
<dbReference type="SMR" id="O64492"/>
<dbReference type="FunCoup" id="O64492">
    <property type="interactions" value="285"/>
</dbReference>
<dbReference type="STRING" id="3702.O64492"/>
<dbReference type="PaxDb" id="3702-AT1G04150.1"/>
<dbReference type="ProteomicsDB" id="183474"/>
<dbReference type="EnsemblPlants" id="AT1G04150.1">
    <property type="protein sequence ID" value="AT1G04150.1"/>
    <property type="gene ID" value="AT1G04150"/>
</dbReference>
<dbReference type="GeneID" id="839249"/>
<dbReference type="Gramene" id="AT1G04150.1">
    <property type="protein sequence ID" value="AT1G04150.1"/>
    <property type="gene ID" value="AT1G04150"/>
</dbReference>
<dbReference type="KEGG" id="ath:AT1G04150"/>
<dbReference type="Araport" id="AT1G04150"/>
<dbReference type="TAIR" id="AT1G04150">
    <property type="gene designation" value="MCTP10"/>
</dbReference>
<dbReference type="eggNOG" id="ENOG502QSFJ">
    <property type="taxonomic scope" value="Eukaryota"/>
</dbReference>
<dbReference type="HOGENOM" id="CLU_003762_1_0_1"/>
<dbReference type="InParanoid" id="O64492"/>
<dbReference type="OMA" id="YITVIVE"/>
<dbReference type="PRO" id="PR:O64492"/>
<dbReference type="Proteomes" id="UP000006548">
    <property type="component" value="Chromosome 1"/>
</dbReference>
<dbReference type="ExpressionAtlas" id="O64492">
    <property type="expression patterns" value="baseline and differential"/>
</dbReference>
<dbReference type="GO" id="GO:0005789">
    <property type="term" value="C:endoplasmic reticulum membrane"/>
    <property type="evidence" value="ECO:0007669"/>
    <property type="project" value="UniProtKB-SubCell"/>
</dbReference>
<dbReference type="GO" id="GO:0046872">
    <property type="term" value="F:metal ion binding"/>
    <property type="evidence" value="ECO:0007669"/>
    <property type="project" value="UniProtKB-KW"/>
</dbReference>
<dbReference type="CDD" id="cd04022">
    <property type="entry name" value="C2A_MCTP_PRT_plant"/>
    <property type="match status" value="1"/>
</dbReference>
<dbReference type="CDD" id="cd08378">
    <property type="entry name" value="C2B_MCTP_PRT_plant"/>
    <property type="match status" value="1"/>
</dbReference>
<dbReference type="CDD" id="cd04019">
    <property type="entry name" value="C2C_MCTP_PRT_plant"/>
    <property type="match status" value="1"/>
</dbReference>
<dbReference type="CDD" id="cd08379">
    <property type="entry name" value="C2D_MCTP_PRT_plant"/>
    <property type="match status" value="1"/>
</dbReference>
<dbReference type="FunFam" id="2.60.40.150:FF:000090">
    <property type="entry name" value="C2 domain-containing protein"/>
    <property type="match status" value="1"/>
</dbReference>
<dbReference type="Gene3D" id="2.60.40.150">
    <property type="entry name" value="C2 domain"/>
    <property type="match status" value="4"/>
</dbReference>
<dbReference type="InterPro" id="IPR000008">
    <property type="entry name" value="C2_dom"/>
</dbReference>
<dbReference type="InterPro" id="IPR035892">
    <property type="entry name" value="C2_domain_sf"/>
</dbReference>
<dbReference type="InterPro" id="IPR047257">
    <property type="entry name" value="C2B_MCTP_PRT_plant"/>
</dbReference>
<dbReference type="InterPro" id="IPR047258">
    <property type="entry name" value="C2C_MCTP_PRT_plant"/>
</dbReference>
<dbReference type="InterPro" id="IPR047255">
    <property type="entry name" value="C2D_MCTP_PRT_plant"/>
</dbReference>
<dbReference type="InterPro" id="IPR013583">
    <property type="entry name" value="MCTP_C"/>
</dbReference>
<dbReference type="InterPro" id="IPR047259">
    <property type="entry name" value="QUIRKY-like"/>
</dbReference>
<dbReference type="PANTHER" id="PTHR31425:SF48">
    <property type="entry name" value="MULTIPLE C2 DOMAIN AND TRANSMEMBRANE REGION PROTEIN 10"/>
    <property type="match status" value="1"/>
</dbReference>
<dbReference type="PANTHER" id="PTHR31425">
    <property type="entry name" value="PHOSPHORIBOSYLANTHRANILATE TRANSFERASE ISOFORM 1"/>
    <property type="match status" value="1"/>
</dbReference>
<dbReference type="Pfam" id="PF00168">
    <property type="entry name" value="C2"/>
    <property type="match status" value="4"/>
</dbReference>
<dbReference type="Pfam" id="PF08372">
    <property type="entry name" value="PRT_C"/>
    <property type="match status" value="1"/>
</dbReference>
<dbReference type="SMART" id="SM00239">
    <property type="entry name" value="C2"/>
    <property type="match status" value="4"/>
</dbReference>
<dbReference type="SUPFAM" id="SSF49562">
    <property type="entry name" value="C2 domain (Calcium/lipid-binding domain, CaLB)"/>
    <property type="match status" value="4"/>
</dbReference>
<dbReference type="PROSITE" id="PS50004">
    <property type="entry name" value="C2"/>
    <property type="match status" value="4"/>
</dbReference>
<gene>
    <name evidence="5" type="primary">MCTP10</name>
    <name evidence="7" type="ordered locus">At1g04150</name>
    <name evidence="8" type="ORF">F20D22.8</name>
</gene>
<proteinExistence type="evidence at transcript level"/>
<comment type="function">
    <text evidence="5">May function as a signaling molecule by regulating the trafficking of other regulators.</text>
</comment>
<comment type="cofactor">
    <cofactor evidence="2">
        <name>Ca(2+)</name>
        <dbReference type="ChEBI" id="CHEBI:29108"/>
    </cofactor>
</comment>
<comment type="subcellular location">
    <subcellularLocation>
        <location evidence="4">Endoplasmic reticulum membrane</location>
        <topology evidence="1">Multi-pass membrane protein</topology>
    </subcellularLocation>
</comment>
<comment type="tissue specificity">
    <text evidence="4">Highly expressed in roots meristems, shoot apical meristems (SAMs) and in incipient leaf primordia (PubMed:29259105). Observed in flowers (PubMed:29259105).</text>
</comment>
<comment type="developmental stage">
    <text evidence="4">Present in developing flowers, particularly in pistils.</text>
</comment>
<comment type="similarity">
    <text evidence="6">Belongs to the MCTP family.</text>
</comment>
<keyword id="KW-0106">Calcium</keyword>
<keyword id="KW-0256">Endoplasmic reticulum</keyword>
<keyword id="KW-0472">Membrane</keyword>
<keyword id="KW-0479">Metal-binding</keyword>
<keyword id="KW-1185">Reference proteome</keyword>
<keyword id="KW-0677">Repeat</keyword>
<keyword id="KW-0812">Transmembrane</keyword>
<keyword id="KW-1133">Transmembrane helix</keyword>
<name>MCT10_ARATH</name>
<evidence type="ECO:0000255" key="1"/>
<evidence type="ECO:0000255" key="2">
    <source>
        <dbReference type="PROSITE-ProRule" id="PRU00041"/>
    </source>
</evidence>
<evidence type="ECO:0000256" key="3">
    <source>
        <dbReference type="SAM" id="MobiDB-lite"/>
    </source>
</evidence>
<evidence type="ECO:0000269" key="4">
    <source>
    </source>
</evidence>
<evidence type="ECO:0000303" key="5">
    <source>
    </source>
</evidence>
<evidence type="ECO:0000305" key="6"/>
<evidence type="ECO:0000312" key="7">
    <source>
        <dbReference type="Araport" id="AT1G04150"/>
    </source>
</evidence>
<evidence type="ECO:0000312" key="8">
    <source>
        <dbReference type="EMBL" id="AAC16746.1"/>
    </source>
</evidence>
<sequence length="1012" mass="113934">MTEAKTGTGNERLVVEIVGAHNLMPKDGEDSSSPFVEVQFENQRLRTKVKPKDLNPIWNEKLVFHVIDVNDLRHKALEINVYNEKRSSNSRNFLGKVRVLGSSVGREGESVVQLYTLEKRSLFSSVRGEISVKHYMTTTAENGENVRRVNRSGGSKKSKKVQNVSSSMAIQQQQQQQQQQISLHNHNRGNQQQSQQNGQGQRMLPFYPHQSEIKPLVITALPSPMPGPGPRPIVYSNGSSEFSLKETKPCLGGTSNGLGGLSSHKDKTSSTYDLVEQMQYLYVNIVKAKDLSVLGEVVSEVKLGNYRGVTKKVSSNSSNPEWNQVFVFSKERIQSSVVELFVKEGNKDEYTGRVLFDLSEIPTRVPPDSPLAPQWYKIENRNGGRGNGELMVSVWFGTQADEAFAEAWHSKAGNVHIEELSSIKSKVYLSPKLWYLRISVIEAQDVAIMDKGSSLMRFPELSAKLQVGSQILRTAIASAIPTKSFSNPYWNEDLMFVVAEPFEDCVTVVVEDRLNGGAIGGQNDVAVGRVQIPISAVERRTGDTLVGSRWFSLDNGNNNNRFGSRIHLRLSLDGGYHVLDEATMYNSDVRPTAKELWKPQVGLLEIGILSATGLMPMKVRDGKCGGIADSYCVAKYGPKWVRTRTVVDSLCPKWNEQYTWEVYDPCTVVTVGVFDNARVNENNNSRDVRIGKVRIRLSTLETGRVYTHSYPLIVLHPSGVKKTGELHLAVRLSCGNAVNMLHMYALPLLPKMHYTQPLGVHMLERLRYQTLNAVAARLSRAEPPLGREVVEYMLDHDFHVWSMRRSKANFFRLVNVISGLVAVAKLVEVMRSWSKPVYSTVFVLAFLFMVLFPELLLPCLLLYTAAVGVWRFRRRSRYPPHMDARISHAETVFPDELDEEFDTFPTSRGFDVVRMRYDRVRSIAGRVQTVVGDMASQGERVQALLSWRDPRATFLFLMFCLLAAVGFYTVPVKLTVAISGLYYLRPPRFRRKLPSRGLSFFRRLPSRADSLL</sequence>